<gene>
    <name type="primary">ushA</name>
</gene>
<name>USHA_SALPU</name>
<proteinExistence type="inferred from homology"/>
<reference key="1">
    <citation type="journal article" date="2001" name="Microbiology">
        <title>The cryptic ushA gene (ushA(c)) in natural isolates of Salmonella enterica (serotype Typhimurium) has been inactivated by a single missense mutation.</title>
        <authorList>
            <person name="Innes D."/>
            <person name="Beacham I.R."/>
            <person name="Beven C.-A."/>
            <person name="Douglas M."/>
            <person name="Laird M.W."/>
            <person name="Joly J.C."/>
            <person name="Burns D.M."/>
        </authorList>
    </citation>
    <scope>NUCLEOTIDE SEQUENCE [GENOMIC DNA]</scope>
</reference>
<keyword id="KW-1015">Disulfide bond</keyword>
<keyword id="KW-0378">Hydrolase</keyword>
<keyword id="KW-0479">Metal-binding</keyword>
<keyword id="KW-0547">Nucleotide-binding</keyword>
<keyword id="KW-0574">Periplasm</keyword>
<keyword id="KW-0732">Signal</keyword>
<keyword id="KW-0862">Zinc</keyword>
<accession>Q9RN37</accession>
<dbReference type="EC" id="3.6.1.45"/>
<dbReference type="EC" id="3.1.3.5"/>
<dbReference type="EMBL" id="AF188727">
    <property type="protein sequence ID" value="AAF05581.1"/>
    <property type="molecule type" value="Genomic_DNA"/>
</dbReference>
<dbReference type="SMR" id="Q9RN37"/>
<dbReference type="GO" id="GO:0030288">
    <property type="term" value="C:outer membrane-bounded periplasmic space"/>
    <property type="evidence" value="ECO:0007669"/>
    <property type="project" value="TreeGrafter"/>
</dbReference>
<dbReference type="GO" id="GO:0008253">
    <property type="term" value="F:5'-nucleotidase activity"/>
    <property type="evidence" value="ECO:0007669"/>
    <property type="project" value="UniProtKB-EC"/>
</dbReference>
<dbReference type="GO" id="GO:0046872">
    <property type="term" value="F:metal ion binding"/>
    <property type="evidence" value="ECO:0007669"/>
    <property type="project" value="UniProtKB-KW"/>
</dbReference>
<dbReference type="GO" id="GO:0000166">
    <property type="term" value="F:nucleotide binding"/>
    <property type="evidence" value="ECO:0007669"/>
    <property type="project" value="UniProtKB-KW"/>
</dbReference>
<dbReference type="GO" id="GO:0008768">
    <property type="term" value="F:UDP-sugar diphosphatase activity"/>
    <property type="evidence" value="ECO:0007669"/>
    <property type="project" value="UniProtKB-EC"/>
</dbReference>
<dbReference type="GO" id="GO:0009166">
    <property type="term" value="P:nucleotide catabolic process"/>
    <property type="evidence" value="ECO:0007669"/>
    <property type="project" value="InterPro"/>
</dbReference>
<dbReference type="CDD" id="cd07405">
    <property type="entry name" value="MPP_UshA_N"/>
    <property type="match status" value="1"/>
</dbReference>
<dbReference type="FunFam" id="3.60.21.10:FF:000025">
    <property type="entry name" value="Protein UshA"/>
    <property type="match status" value="1"/>
</dbReference>
<dbReference type="FunFam" id="3.90.780.10:FF:000003">
    <property type="entry name" value="Protein UshA"/>
    <property type="match status" value="1"/>
</dbReference>
<dbReference type="Gene3D" id="3.60.21.10">
    <property type="match status" value="1"/>
</dbReference>
<dbReference type="Gene3D" id="3.90.780.10">
    <property type="entry name" value="5'-Nucleotidase, C-terminal domain"/>
    <property type="match status" value="1"/>
</dbReference>
<dbReference type="InterPro" id="IPR008334">
    <property type="entry name" value="5'-Nucleotdase_C"/>
</dbReference>
<dbReference type="InterPro" id="IPR036907">
    <property type="entry name" value="5'-Nucleotdase_C_sf"/>
</dbReference>
<dbReference type="InterPro" id="IPR006146">
    <property type="entry name" value="5'-Nucleotdase_CS"/>
</dbReference>
<dbReference type="InterPro" id="IPR006179">
    <property type="entry name" value="5_nucleotidase/apyrase"/>
</dbReference>
<dbReference type="InterPro" id="IPR004843">
    <property type="entry name" value="Calcineurin-like_PHP_ApaH"/>
</dbReference>
<dbReference type="InterPro" id="IPR029052">
    <property type="entry name" value="Metallo-depent_PP-like"/>
</dbReference>
<dbReference type="NCBIfam" id="NF007109">
    <property type="entry name" value="PRK09558.1"/>
    <property type="match status" value="1"/>
</dbReference>
<dbReference type="PANTHER" id="PTHR11575">
    <property type="entry name" value="5'-NUCLEOTIDASE-RELATED"/>
    <property type="match status" value="1"/>
</dbReference>
<dbReference type="PANTHER" id="PTHR11575:SF46">
    <property type="entry name" value="PROTEIN USHA"/>
    <property type="match status" value="1"/>
</dbReference>
<dbReference type="Pfam" id="PF02872">
    <property type="entry name" value="5_nucleotid_C"/>
    <property type="match status" value="1"/>
</dbReference>
<dbReference type="Pfam" id="PF00149">
    <property type="entry name" value="Metallophos"/>
    <property type="match status" value="1"/>
</dbReference>
<dbReference type="PRINTS" id="PR01607">
    <property type="entry name" value="APYRASEFAMLY"/>
</dbReference>
<dbReference type="SUPFAM" id="SSF55816">
    <property type="entry name" value="5'-nucleotidase (syn. UDP-sugar hydrolase), C-terminal domain"/>
    <property type="match status" value="1"/>
</dbReference>
<dbReference type="SUPFAM" id="SSF56300">
    <property type="entry name" value="Metallo-dependent phosphatases"/>
    <property type="match status" value="1"/>
</dbReference>
<dbReference type="PROSITE" id="PS00785">
    <property type="entry name" value="5_NUCLEOTIDASE_1"/>
    <property type="match status" value="1"/>
</dbReference>
<dbReference type="PROSITE" id="PS00786">
    <property type="entry name" value="5_NUCLEOTIDASE_2"/>
    <property type="match status" value="1"/>
</dbReference>
<organism>
    <name type="scientific">Salmonella pullorum</name>
    <dbReference type="NCBI Taxonomy" id="605"/>
    <lineage>
        <taxon>Bacteria</taxon>
        <taxon>Pseudomonadati</taxon>
        <taxon>Pseudomonadota</taxon>
        <taxon>Gammaproteobacteria</taxon>
        <taxon>Enterobacterales</taxon>
        <taxon>Enterobacteriaceae</taxon>
        <taxon>Salmonella</taxon>
    </lineage>
</organism>
<comment type="function">
    <text evidence="1">Degradation of external UDP-glucose to uridine monophosphate and glucose-1-phosphate, which can then be used by the cell.</text>
</comment>
<comment type="catalytic activity">
    <reaction>
        <text>UDP-sugar + H2O = UMP + alpha-D-aldose 1-phosphate.</text>
        <dbReference type="EC" id="3.6.1.45"/>
    </reaction>
</comment>
<comment type="catalytic activity">
    <reaction>
        <text>a ribonucleoside 5'-phosphate + H2O = a ribonucleoside + phosphate</text>
        <dbReference type="Rhea" id="RHEA:12484"/>
        <dbReference type="ChEBI" id="CHEBI:15377"/>
        <dbReference type="ChEBI" id="CHEBI:18254"/>
        <dbReference type="ChEBI" id="CHEBI:43474"/>
        <dbReference type="ChEBI" id="CHEBI:58043"/>
        <dbReference type="EC" id="3.1.3.5"/>
    </reaction>
</comment>
<comment type="cofactor">
    <cofactor evidence="1">
        <name>Zn(2+)</name>
        <dbReference type="ChEBI" id="CHEBI:29105"/>
    </cofactor>
    <text evidence="1">Binds 2 Zn(2+) ions per subunit.</text>
</comment>
<comment type="subunit">
    <text evidence="1">Monomer.</text>
</comment>
<comment type="subcellular location">
    <subcellularLocation>
        <location evidence="1">Periplasm</location>
    </subcellularLocation>
</comment>
<comment type="similarity">
    <text evidence="2">Belongs to the 5'-nucleotidase family.</text>
</comment>
<feature type="signal peptide" evidence="1">
    <location>
        <begin position="1"/>
        <end position="25"/>
    </location>
</feature>
<feature type="chain" id="PRO_0000000032" description="Protein UshA">
    <location>
        <begin position="26"/>
        <end position="550"/>
    </location>
</feature>
<feature type="binding site" evidence="1">
    <location>
        <position position="41"/>
    </location>
    <ligand>
        <name>Zn(2+)</name>
        <dbReference type="ChEBI" id="CHEBI:29105"/>
        <label>1</label>
    </ligand>
</feature>
<feature type="binding site" evidence="1">
    <location>
        <position position="43"/>
    </location>
    <ligand>
        <name>Zn(2+)</name>
        <dbReference type="ChEBI" id="CHEBI:29105"/>
        <label>1</label>
    </ligand>
</feature>
<feature type="binding site" evidence="1">
    <location>
        <position position="84"/>
    </location>
    <ligand>
        <name>Zn(2+)</name>
        <dbReference type="ChEBI" id="CHEBI:29105"/>
        <label>1</label>
    </ligand>
</feature>
<feature type="binding site" evidence="1">
    <location>
        <position position="84"/>
    </location>
    <ligand>
        <name>Zn(2+)</name>
        <dbReference type="ChEBI" id="CHEBI:29105"/>
        <label>2</label>
    </ligand>
</feature>
<feature type="binding site" evidence="1">
    <location>
        <position position="116"/>
    </location>
    <ligand>
        <name>Zn(2+)</name>
        <dbReference type="ChEBI" id="CHEBI:29105"/>
        <label>2</label>
    </ligand>
</feature>
<feature type="binding site" evidence="1">
    <location>
        <position position="217"/>
    </location>
    <ligand>
        <name>Zn(2+)</name>
        <dbReference type="ChEBI" id="CHEBI:29105"/>
        <label>2</label>
    </ligand>
</feature>
<feature type="binding site" evidence="1">
    <location>
        <position position="252"/>
    </location>
    <ligand>
        <name>Zn(2+)</name>
        <dbReference type="ChEBI" id="CHEBI:29105"/>
        <label>2</label>
    </ligand>
</feature>
<feature type="binding site" evidence="1">
    <location>
        <position position="254"/>
    </location>
    <ligand>
        <name>Zn(2+)</name>
        <dbReference type="ChEBI" id="CHEBI:29105"/>
        <label>1</label>
    </ligand>
</feature>
<feature type="binding site" evidence="1">
    <location>
        <position position="429"/>
    </location>
    <ligand>
        <name>substrate</name>
    </ligand>
</feature>
<feature type="binding site" evidence="1">
    <location>
        <begin position="498"/>
        <end position="504"/>
    </location>
    <ligand>
        <name>substrate</name>
    </ligand>
</feature>
<feature type="site" description="Transition state stabilizer" evidence="1">
    <location>
        <position position="117"/>
    </location>
</feature>
<feature type="site" description="Transition state stabilizer" evidence="1">
    <location>
        <position position="120"/>
    </location>
</feature>
<feature type="disulfide bond" evidence="1">
    <location>
        <begin position="258"/>
        <end position="275"/>
    </location>
</feature>
<sequence>MKFLKRGVALALLAAFALTTQPAQAYEKDKTYKITILHTNDHHGHFWRSEYGEYGLAAQKTLVDSIRKEVAQEGGGVLLLSGGDINTGVPESDLQDAEPDFRGMNLIGYDAMAVGNHEFDNPLTVLRQQEKWAKFPFLSANIYQKSTGERLFKPWAIFTRQDIKIAVIGLTTDDTAKIGNPEYFTDIEFRKPAEEAKVVIQELNMNEKPDVIIATTHMGHYDNGDHGSNAPGDVEMARSLPAGSLAMIVGGHSQDPVCMASENKKQVNYVPGTPCAPDKQNGIWIVQAHEWGKYVGRADFEFRNGEMKMVNYQLIPVNLKKKVTWDNGKSERVLYTPEIAENPQMLLLLTPFQNKGKVQLEVKIGSVNGLLEGDRSKVRFVQTNMGRVILAAQIARTGADFGVMSGGGIRDSIEAGDITYKSVLKVQPFGNIVVYADMSGKEVVDYLTRVAQMKPDSGAYPQLANVSFVAKEGKLTDLKIKGEPVDPAKTYRMATLSFNATGGDGYPRIDNKPGYVNTGFIDAEVLKEFIQQNSPLDAAAFTPKGEVSWL</sequence>
<protein>
    <recommendedName>
        <fullName>Protein UshA</fullName>
    </recommendedName>
    <domain>
        <recommendedName>
            <fullName>UDP-sugar hydrolase</fullName>
            <ecNumber>3.6.1.45</ecNumber>
        </recommendedName>
        <alternativeName>
            <fullName>UDP-sugar diphosphatase</fullName>
        </alternativeName>
        <alternativeName>
            <fullName>UDP-sugar pyrophosphatase</fullName>
        </alternativeName>
    </domain>
    <domain>
        <recommendedName>
            <fullName>5'-nucleotidase</fullName>
            <shortName>5'-NT</shortName>
            <ecNumber>3.1.3.5</ecNumber>
        </recommendedName>
    </domain>
</protein>
<evidence type="ECO:0000250" key="1"/>
<evidence type="ECO:0000305" key="2"/>